<reference key="1">
    <citation type="submission" date="2006-12" db="EMBL/GenBank/DDBJ databases">
        <title>Complete sequence of Chlorobium phaeobacteroides DSM 266.</title>
        <authorList>
            <consortium name="US DOE Joint Genome Institute"/>
            <person name="Copeland A."/>
            <person name="Lucas S."/>
            <person name="Lapidus A."/>
            <person name="Barry K."/>
            <person name="Detter J.C."/>
            <person name="Glavina del Rio T."/>
            <person name="Hammon N."/>
            <person name="Israni S."/>
            <person name="Pitluck S."/>
            <person name="Goltsman E."/>
            <person name="Schmutz J."/>
            <person name="Larimer F."/>
            <person name="Land M."/>
            <person name="Hauser L."/>
            <person name="Mikhailova N."/>
            <person name="Li T."/>
            <person name="Overmann J."/>
            <person name="Bryant D.A."/>
            <person name="Richardson P."/>
        </authorList>
    </citation>
    <scope>NUCLEOTIDE SEQUENCE [LARGE SCALE GENOMIC DNA]</scope>
    <source>
        <strain>DSM 266 / SMG 266 / 2430</strain>
    </source>
</reference>
<organism>
    <name type="scientific">Chlorobium phaeobacteroides (strain DSM 266 / SMG 266 / 2430)</name>
    <dbReference type="NCBI Taxonomy" id="290317"/>
    <lineage>
        <taxon>Bacteria</taxon>
        <taxon>Pseudomonadati</taxon>
        <taxon>Chlorobiota</taxon>
        <taxon>Chlorobiia</taxon>
        <taxon>Chlorobiales</taxon>
        <taxon>Chlorobiaceae</taxon>
        <taxon>Chlorobium/Pelodictyon group</taxon>
        <taxon>Chlorobium</taxon>
    </lineage>
</organism>
<gene>
    <name evidence="1" type="primary">katG</name>
    <name type="ordered locus">Cpha266_0755</name>
</gene>
<keyword id="KW-0349">Heme</keyword>
<keyword id="KW-0376">Hydrogen peroxide</keyword>
<keyword id="KW-0408">Iron</keyword>
<keyword id="KW-0479">Metal-binding</keyword>
<keyword id="KW-0560">Oxidoreductase</keyword>
<keyword id="KW-0575">Peroxidase</keyword>
<keyword id="KW-1185">Reference proteome</keyword>
<sequence>MSEQSKCPVTGRTAGNPVAGGSMLNRDWWPNQLHLDMLHQHSSLVNPMGDEFRYKEEFRKLDLGAVKKDLYALMTDSQEWWPADYGHYGGLFIRMAWHSAGTYRTSDGRGGGGRGNQRFAPLNSWPDNANLDKARRLLWPIKQKYGKMLSWADLMILAGNCALESMGFKTFGFGGGRVDIWEPEEDIYWGKEVEWLGNNRYSGERDLENPLAAVQMGLIYVNPEGPDGNPDPVAAGRDIRETFARMAMNDEETVALVAGGHTFGKCHGVGDPNLIGPEPEAAGIEEQGLGWKSGYGSGKGDETMTSGLEGAWTPDPIHWDMGYLGMLFKYEWELTKSPAGAWQWKPKDVAEEDLAPAAHDPSKRVPTMMTTADLAMRMDPVYGPISRRYYEHPDQFADAFARAWFKLTHRDMGPKSRYLGAEVPAEDLIWQDPVPAVDHELIGEGEIAELKKRLLASGLPIPELVSTTWASASTFRGSDKRGGANGSRIRLAPQKDWEVNQPEQLQRVLEKLEEIRHAFNGEQSGGKRVSLADLIVLGGCAAVEEAARRAGNDVTIPFAPGRTDASQAETDVESFAVLEPLADGFRNYARQKYSVTPEEMLVDRSQLLTLTATEMTVLLGGLRVLGANFRQSPHGVFTKRHETLTNDFFVNLLDMGTEWKPVSKEHDTFEGRDRKTGEPRWSATRVDLIFGSNARLRAIAEVYGSDDAQEKFVQDFVAAWNKVMNLDRFEIS</sequence>
<proteinExistence type="inferred from homology"/>
<evidence type="ECO:0000255" key="1">
    <source>
        <dbReference type="HAMAP-Rule" id="MF_01961"/>
    </source>
</evidence>
<comment type="function">
    <text evidence="1">Bifunctional enzyme with both catalase and broad-spectrum peroxidase activity.</text>
</comment>
<comment type="catalytic activity">
    <reaction evidence="1">
        <text>H2O2 + AH2 = A + 2 H2O</text>
        <dbReference type="Rhea" id="RHEA:30275"/>
        <dbReference type="ChEBI" id="CHEBI:13193"/>
        <dbReference type="ChEBI" id="CHEBI:15377"/>
        <dbReference type="ChEBI" id="CHEBI:16240"/>
        <dbReference type="ChEBI" id="CHEBI:17499"/>
        <dbReference type="EC" id="1.11.1.21"/>
    </reaction>
</comment>
<comment type="catalytic activity">
    <reaction evidence="1">
        <text>2 H2O2 = O2 + 2 H2O</text>
        <dbReference type="Rhea" id="RHEA:20309"/>
        <dbReference type="ChEBI" id="CHEBI:15377"/>
        <dbReference type="ChEBI" id="CHEBI:15379"/>
        <dbReference type="ChEBI" id="CHEBI:16240"/>
        <dbReference type="EC" id="1.11.1.21"/>
    </reaction>
</comment>
<comment type="cofactor">
    <cofactor evidence="1">
        <name>heme b</name>
        <dbReference type="ChEBI" id="CHEBI:60344"/>
    </cofactor>
    <text evidence="1">Binds 1 heme b (iron(II)-protoporphyrin IX) group per dimer.</text>
</comment>
<comment type="subunit">
    <text evidence="1">Homodimer or homotetramer.</text>
</comment>
<comment type="PTM">
    <text evidence="1">Formation of the three residue Trp-Tyr-Met cross-link is important for the catalase, but not the peroxidase activity of the enzyme.</text>
</comment>
<comment type="similarity">
    <text evidence="1">Belongs to the peroxidase family. Peroxidase/catalase subfamily.</text>
</comment>
<accession>A1BEI1</accession>
<dbReference type="EC" id="1.11.1.21" evidence="1"/>
<dbReference type="EMBL" id="CP000492">
    <property type="protein sequence ID" value="ABL64808.1"/>
    <property type="molecule type" value="Genomic_DNA"/>
</dbReference>
<dbReference type="RefSeq" id="WP_011744637.1">
    <property type="nucleotide sequence ID" value="NC_008639.1"/>
</dbReference>
<dbReference type="SMR" id="A1BEI1"/>
<dbReference type="STRING" id="290317.Cpha266_0755"/>
<dbReference type="PeroxiBase" id="2369">
    <property type="entry name" value="CphCP01_DSM266"/>
</dbReference>
<dbReference type="KEGG" id="cph:Cpha266_0755"/>
<dbReference type="eggNOG" id="COG0376">
    <property type="taxonomic scope" value="Bacteria"/>
</dbReference>
<dbReference type="HOGENOM" id="CLU_025424_2_0_10"/>
<dbReference type="OrthoDB" id="9759743at2"/>
<dbReference type="Proteomes" id="UP000008701">
    <property type="component" value="Chromosome"/>
</dbReference>
<dbReference type="GO" id="GO:0005829">
    <property type="term" value="C:cytosol"/>
    <property type="evidence" value="ECO:0007669"/>
    <property type="project" value="TreeGrafter"/>
</dbReference>
<dbReference type="GO" id="GO:0004096">
    <property type="term" value="F:catalase activity"/>
    <property type="evidence" value="ECO:0007669"/>
    <property type="project" value="UniProtKB-UniRule"/>
</dbReference>
<dbReference type="GO" id="GO:0020037">
    <property type="term" value="F:heme binding"/>
    <property type="evidence" value="ECO:0007669"/>
    <property type="project" value="InterPro"/>
</dbReference>
<dbReference type="GO" id="GO:0046872">
    <property type="term" value="F:metal ion binding"/>
    <property type="evidence" value="ECO:0007669"/>
    <property type="project" value="UniProtKB-KW"/>
</dbReference>
<dbReference type="GO" id="GO:0070301">
    <property type="term" value="P:cellular response to hydrogen peroxide"/>
    <property type="evidence" value="ECO:0007669"/>
    <property type="project" value="TreeGrafter"/>
</dbReference>
<dbReference type="GO" id="GO:0042744">
    <property type="term" value="P:hydrogen peroxide catabolic process"/>
    <property type="evidence" value="ECO:0007669"/>
    <property type="project" value="UniProtKB-KW"/>
</dbReference>
<dbReference type="CDD" id="cd00649">
    <property type="entry name" value="catalase_peroxidase_1"/>
    <property type="match status" value="1"/>
</dbReference>
<dbReference type="CDD" id="cd08200">
    <property type="entry name" value="catalase_peroxidase_2"/>
    <property type="match status" value="1"/>
</dbReference>
<dbReference type="FunFam" id="1.10.420.10:FF:000002">
    <property type="entry name" value="Catalase-peroxidase"/>
    <property type="match status" value="1"/>
</dbReference>
<dbReference type="FunFam" id="1.10.420.10:FF:000004">
    <property type="entry name" value="Catalase-peroxidase"/>
    <property type="match status" value="1"/>
</dbReference>
<dbReference type="FunFam" id="1.10.520.10:FF:000002">
    <property type="entry name" value="Catalase-peroxidase"/>
    <property type="match status" value="1"/>
</dbReference>
<dbReference type="Gene3D" id="1.10.520.10">
    <property type="match status" value="2"/>
</dbReference>
<dbReference type="Gene3D" id="1.10.420.10">
    <property type="entry name" value="Peroxidase, domain 2"/>
    <property type="match status" value="2"/>
</dbReference>
<dbReference type="HAMAP" id="MF_01961">
    <property type="entry name" value="Catal_peroxid"/>
    <property type="match status" value="1"/>
</dbReference>
<dbReference type="InterPro" id="IPR000763">
    <property type="entry name" value="Catalase_peroxidase"/>
</dbReference>
<dbReference type="InterPro" id="IPR002016">
    <property type="entry name" value="Haem_peroxidase"/>
</dbReference>
<dbReference type="InterPro" id="IPR010255">
    <property type="entry name" value="Haem_peroxidase_sf"/>
</dbReference>
<dbReference type="InterPro" id="IPR019794">
    <property type="entry name" value="Peroxidases_AS"/>
</dbReference>
<dbReference type="InterPro" id="IPR019793">
    <property type="entry name" value="Peroxidases_heam-ligand_BS"/>
</dbReference>
<dbReference type="NCBIfam" id="TIGR00198">
    <property type="entry name" value="cat_per_HPI"/>
    <property type="match status" value="1"/>
</dbReference>
<dbReference type="NCBIfam" id="NF011635">
    <property type="entry name" value="PRK15061.1"/>
    <property type="match status" value="1"/>
</dbReference>
<dbReference type="PANTHER" id="PTHR30555:SF0">
    <property type="entry name" value="CATALASE-PEROXIDASE"/>
    <property type="match status" value="1"/>
</dbReference>
<dbReference type="PANTHER" id="PTHR30555">
    <property type="entry name" value="HYDROPEROXIDASE I, BIFUNCTIONAL CATALASE-PEROXIDASE"/>
    <property type="match status" value="1"/>
</dbReference>
<dbReference type="Pfam" id="PF00141">
    <property type="entry name" value="peroxidase"/>
    <property type="match status" value="2"/>
</dbReference>
<dbReference type="PRINTS" id="PR00460">
    <property type="entry name" value="BPEROXIDASE"/>
</dbReference>
<dbReference type="PRINTS" id="PR00458">
    <property type="entry name" value="PEROXIDASE"/>
</dbReference>
<dbReference type="SUPFAM" id="SSF48113">
    <property type="entry name" value="Heme-dependent peroxidases"/>
    <property type="match status" value="2"/>
</dbReference>
<dbReference type="PROSITE" id="PS00435">
    <property type="entry name" value="PEROXIDASE_1"/>
    <property type="match status" value="1"/>
</dbReference>
<dbReference type="PROSITE" id="PS00436">
    <property type="entry name" value="PEROXIDASE_2"/>
    <property type="match status" value="1"/>
</dbReference>
<dbReference type="PROSITE" id="PS50873">
    <property type="entry name" value="PEROXIDASE_4"/>
    <property type="match status" value="1"/>
</dbReference>
<protein>
    <recommendedName>
        <fullName evidence="1">Catalase-peroxidase</fullName>
        <shortName evidence="1">CP</shortName>
        <ecNumber evidence="1">1.11.1.21</ecNumber>
    </recommendedName>
    <alternativeName>
        <fullName evidence="1">Peroxidase/catalase</fullName>
    </alternativeName>
</protein>
<feature type="chain" id="PRO_0000354760" description="Catalase-peroxidase">
    <location>
        <begin position="1"/>
        <end position="732"/>
    </location>
</feature>
<feature type="active site" description="Proton acceptor" evidence="1">
    <location>
        <position position="98"/>
    </location>
</feature>
<feature type="binding site" description="axial binding residue" evidence="1">
    <location>
        <position position="261"/>
    </location>
    <ligand>
        <name>heme b</name>
        <dbReference type="ChEBI" id="CHEBI:60344"/>
    </ligand>
    <ligandPart>
        <name>Fe</name>
        <dbReference type="ChEBI" id="CHEBI:18248"/>
    </ligandPart>
</feature>
<feature type="site" description="Transition state stabilizer" evidence="1">
    <location>
        <position position="94"/>
    </location>
</feature>
<feature type="cross-link" description="Tryptophyl-tyrosyl-methioninium (Trp-Tyr) (with M-246)" evidence="1">
    <location>
        <begin position="97"/>
        <end position="220"/>
    </location>
</feature>
<feature type="cross-link" description="Tryptophyl-tyrosyl-methioninium (Tyr-Met) (with W-97)" evidence="1">
    <location>
        <begin position="220"/>
        <end position="246"/>
    </location>
</feature>
<name>KATG_CHLPD</name>